<dbReference type="EMBL" id="CR925677">
    <property type="protein sequence ID" value="CAI28402.1"/>
    <property type="molecule type" value="Genomic_DNA"/>
</dbReference>
<dbReference type="RefSeq" id="WP_011255990.1">
    <property type="nucleotide sequence ID" value="NC_006831.1"/>
</dbReference>
<dbReference type="SMR" id="Q5FGQ8"/>
<dbReference type="KEGG" id="erg:ERGA_CDS_09500"/>
<dbReference type="HOGENOM" id="CLU_017633_0_7_5"/>
<dbReference type="OrthoDB" id="9779889at2"/>
<dbReference type="Proteomes" id="UP000000533">
    <property type="component" value="Chromosome"/>
</dbReference>
<dbReference type="GO" id="GO:0005737">
    <property type="term" value="C:cytoplasm"/>
    <property type="evidence" value="ECO:0007669"/>
    <property type="project" value="UniProtKB-SubCell"/>
</dbReference>
<dbReference type="GO" id="GO:0005524">
    <property type="term" value="F:ATP binding"/>
    <property type="evidence" value="ECO:0007669"/>
    <property type="project" value="InterPro"/>
</dbReference>
<dbReference type="GO" id="GO:0031072">
    <property type="term" value="F:heat shock protein binding"/>
    <property type="evidence" value="ECO:0007669"/>
    <property type="project" value="InterPro"/>
</dbReference>
<dbReference type="GO" id="GO:0051082">
    <property type="term" value="F:unfolded protein binding"/>
    <property type="evidence" value="ECO:0007669"/>
    <property type="project" value="UniProtKB-UniRule"/>
</dbReference>
<dbReference type="GO" id="GO:0008270">
    <property type="term" value="F:zinc ion binding"/>
    <property type="evidence" value="ECO:0007669"/>
    <property type="project" value="UniProtKB-UniRule"/>
</dbReference>
<dbReference type="GO" id="GO:0051085">
    <property type="term" value="P:chaperone cofactor-dependent protein refolding"/>
    <property type="evidence" value="ECO:0007669"/>
    <property type="project" value="TreeGrafter"/>
</dbReference>
<dbReference type="GO" id="GO:0006260">
    <property type="term" value="P:DNA replication"/>
    <property type="evidence" value="ECO:0007669"/>
    <property type="project" value="UniProtKB-KW"/>
</dbReference>
<dbReference type="GO" id="GO:0042026">
    <property type="term" value="P:protein refolding"/>
    <property type="evidence" value="ECO:0007669"/>
    <property type="project" value="TreeGrafter"/>
</dbReference>
<dbReference type="GO" id="GO:0009408">
    <property type="term" value="P:response to heat"/>
    <property type="evidence" value="ECO:0007669"/>
    <property type="project" value="InterPro"/>
</dbReference>
<dbReference type="CDD" id="cd06257">
    <property type="entry name" value="DnaJ"/>
    <property type="match status" value="1"/>
</dbReference>
<dbReference type="CDD" id="cd10747">
    <property type="entry name" value="DnaJ_C"/>
    <property type="match status" value="1"/>
</dbReference>
<dbReference type="CDD" id="cd10719">
    <property type="entry name" value="DnaJ_zf"/>
    <property type="match status" value="1"/>
</dbReference>
<dbReference type="FunFam" id="1.10.287.110:FF:000034">
    <property type="entry name" value="Chaperone protein DnaJ"/>
    <property type="match status" value="1"/>
</dbReference>
<dbReference type="FunFam" id="2.10.230.10:FF:000002">
    <property type="entry name" value="Molecular chaperone DnaJ"/>
    <property type="match status" value="1"/>
</dbReference>
<dbReference type="FunFam" id="2.60.260.20:FF:000004">
    <property type="entry name" value="Molecular chaperone DnaJ"/>
    <property type="match status" value="1"/>
</dbReference>
<dbReference type="Gene3D" id="1.10.287.110">
    <property type="entry name" value="DnaJ domain"/>
    <property type="match status" value="1"/>
</dbReference>
<dbReference type="Gene3D" id="2.10.230.10">
    <property type="entry name" value="Heat shock protein DnaJ, cysteine-rich domain"/>
    <property type="match status" value="1"/>
</dbReference>
<dbReference type="Gene3D" id="2.60.260.20">
    <property type="entry name" value="Urease metallochaperone UreE, N-terminal domain"/>
    <property type="match status" value="2"/>
</dbReference>
<dbReference type="HAMAP" id="MF_01152">
    <property type="entry name" value="DnaJ"/>
    <property type="match status" value="1"/>
</dbReference>
<dbReference type="InterPro" id="IPR012724">
    <property type="entry name" value="DnaJ"/>
</dbReference>
<dbReference type="InterPro" id="IPR002939">
    <property type="entry name" value="DnaJ_C"/>
</dbReference>
<dbReference type="InterPro" id="IPR001623">
    <property type="entry name" value="DnaJ_domain"/>
</dbReference>
<dbReference type="InterPro" id="IPR018253">
    <property type="entry name" value="DnaJ_domain_CS"/>
</dbReference>
<dbReference type="InterPro" id="IPR008971">
    <property type="entry name" value="HSP40/DnaJ_pept-bd"/>
</dbReference>
<dbReference type="InterPro" id="IPR001305">
    <property type="entry name" value="HSP_DnaJ_Cys-rich_dom"/>
</dbReference>
<dbReference type="InterPro" id="IPR036410">
    <property type="entry name" value="HSP_DnaJ_Cys-rich_dom_sf"/>
</dbReference>
<dbReference type="InterPro" id="IPR036869">
    <property type="entry name" value="J_dom_sf"/>
</dbReference>
<dbReference type="NCBIfam" id="TIGR02349">
    <property type="entry name" value="DnaJ_bact"/>
    <property type="match status" value="1"/>
</dbReference>
<dbReference type="NCBIfam" id="NF008035">
    <property type="entry name" value="PRK10767.1"/>
    <property type="match status" value="1"/>
</dbReference>
<dbReference type="PANTHER" id="PTHR43096:SF48">
    <property type="entry name" value="CHAPERONE PROTEIN DNAJ"/>
    <property type="match status" value="1"/>
</dbReference>
<dbReference type="PANTHER" id="PTHR43096">
    <property type="entry name" value="DNAJ HOMOLOG 1, MITOCHONDRIAL-RELATED"/>
    <property type="match status" value="1"/>
</dbReference>
<dbReference type="Pfam" id="PF00226">
    <property type="entry name" value="DnaJ"/>
    <property type="match status" value="1"/>
</dbReference>
<dbReference type="Pfam" id="PF01556">
    <property type="entry name" value="DnaJ_C"/>
    <property type="match status" value="1"/>
</dbReference>
<dbReference type="Pfam" id="PF00684">
    <property type="entry name" value="DnaJ_CXXCXGXG"/>
    <property type="match status" value="1"/>
</dbReference>
<dbReference type="PRINTS" id="PR00625">
    <property type="entry name" value="JDOMAIN"/>
</dbReference>
<dbReference type="SMART" id="SM00271">
    <property type="entry name" value="DnaJ"/>
    <property type="match status" value="1"/>
</dbReference>
<dbReference type="SUPFAM" id="SSF46565">
    <property type="entry name" value="Chaperone J-domain"/>
    <property type="match status" value="1"/>
</dbReference>
<dbReference type="SUPFAM" id="SSF57938">
    <property type="entry name" value="DnaJ/Hsp40 cysteine-rich domain"/>
    <property type="match status" value="1"/>
</dbReference>
<dbReference type="SUPFAM" id="SSF49493">
    <property type="entry name" value="HSP40/DnaJ peptide-binding domain"/>
    <property type="match status" value="2"/>
</dbReference>
<dbReference type="PROSITE" id="PS00636">
    <property type="entry name" value="DNAJ_1"/>
    <property type="match status" value="1"/>
</dbReference>
<dbReference type="PROSITE" id="PS50076">
    <property type="entry name" value="DNAJ_2"/>
    <property type="match status" value="1"/>
</dbReference>
<dbReference type="PROSITE" id="PS51188">
    <property type="entry name" value="ZF_CR"/>
    <property type="match status" value="1"/>
</dbReference>
<comment type="function">
    <text evidence="1">Participates actively in the response to hyperosmotic and heat shock by preventing the aggregation of stress-denatured proteins and by disaggregating proteins, also in an autonomous, DnaK-independent fashion. Unfolded proteins bind initially to DnaJ; upon interaction with the DnaJ-bound protein, DnaK hydrolyzes its bound ATP, resulting in the formation of a stable complex. GrpE releases ADP from DnaK; ATP binding to DnaK triggers the release of the substrate protein, thus completing the reaction cycle. Several rounds of ATP-dependent interactions between DnaJ, DnaK and GrpE are required for fully efficient folding. Also involved, together with DnaK and GrpE, in the DNA replication of plasmids through activation of initiation proteins.</text>
</comment>
<comment type="cofactor">
    <cofactor evidence="1">
        <name>Zn(2+)</name>
        <dbReference type="ChEBI" id="CHEBI:29105"/>
    </cofactor>
    <text evidence="1">Binds 2 Zn(2+) ions per monomer.</text>
</comment>
<comment type="subunit">
    <text evidence="1">Homodimer.</text>
</comment>
<comment type="subcellular location">
    <subcellularLocation>
        <location evidence="1">Cytoplasm</location>
    </subcellularLocation>
</comment>
<comment type="domain">
    <text evidence="1">The J domain is necessary and sufficient to stimulate DnaK ATPase activity. Zinc center 1 plays an important role in the autonomous, DnaK-independent chaperone activity of DnaJ. Zinc center 2 is essential for interaction with DnaK and for DnaJ activity.</text>
</comment>
<comment type="similarity">
    <text evidence="1">Belongs to the DnaJ family.</text>
</comment>
<keyword id="KW-0143">Chaperone</keyword>
<keyword id="KW-0963">Cytoplasm</keyword>
<keyword id="KW-0235">DNA replication</keyword>
<keyword id="KW-0479">Metal-binding</keyword>
<keyword id="KW-0677">Repeat</keyword>
<keyword id="KW-0346">Stress response</keyword>
<keyword id="KW-0862">Zinc</keyword>
<keyword id="KW-0863">Zinc-finger</keyword>
<gene>
    <name evidence="1" type="primary">dnaJ</name>
    <name type="ordered locus">ERGA_CDS_09500</name>
</gene>
<accession>Q5FGQ8</accession>
<feature type="chain" id="PRO_0000070780" description="Chaperone protein DnaJ">
    <location>
        <begin position="1"/>
        <end position="382"/>
    </location>
</feature>
<feature type="domain" description="J" evidence="1">
    <location>
        <begin position="5"/>
        <end position="70"/>
    </location>
</feature>
<feature type="repeat" description="CXXCXGXG motif">
    <location>
        <begin position="151"/>
        <end position="158"/>
    </location>
</feature>
<feature type="repeat" description="CXXCXGXG motif">
    <location>
        <begin position="168"/>
        <end position="175"/>
    </location>
</feature>
<feature type="repeat" description="CXXCXGXG motif">
    <location>
        <begin position="190"/>
        <end position="197"/>
    </location>
</feature>
<feature type="repeat" description="CXXCXGXG motif">
    <location>
        <begin position="204"/>
        <end position="211"/>
    </location>
</feature>
<feature type="zinc finger region" description="CR-type" evidence="1">
    <location>
        <begin position="138"/>
        <end position="216"/>
    </location>
</feature>
<feature type="binding site" evidence="1">
    <location>
        <position position="151"/>
    </location>
    <ligand>
        <name>Zn(2+)</name>
        <dbReference type="ChEBI" id="CHEBI:29105"/>
        <label>1</label>
    </ligand>
</feature>
<feature type="binding site" evidence="1">
    <location>
        <position position="154"/>
    </location>
    <ligand>
        <name>Zn(2+)</name>
        <dbReference type="ChEBI" id="CHEBI:29105"/>
        <label>1</label>
    </ligand>
</feature>
<feature type="binding site" evidence="1">
    <location>
        <position position="168"/>
    </location>
    <ligand>
        <name>Zn(2+)</name>
        <dbReference type="ChEBI" id="CHEBI:29105"/>
        <label>2</label>
    </ligand>
</feature>
<feature type="binding site" evidence="1">
    <location>
        <position position="171"/>
    </location>
    <ligand>
        <name>Zn(2+)</name>
        <dbReference type="ChEBI" id="CHEBI:29105"/>
        <label>2</label>
    </ligand>
</feature>
<feature type="binding site" evidence="1">
    <location>
        <position position="190"/>
    </location>
    <ligand>
        <name>Zn(2+)</name>
        <dbReference type="ChEBI" id="CHEBI:29105"/>
        <label>2</label>
    </ligand>
</feature>
<feature type="binding site" evidence="1">
    <location>
        <position position="193"/>
    </location>
    <ligand>
        <name>Zn(2+)</name>
        <dbReference type="ChEBI" id="CHEBI:29105"/>
        <label>2</label>
    </ligand>
</feature>
<feature type="binding site" evidence="1">
    <location>
        <position position="204"/>
    </location>
    <ligand>
        <name>Zn(2+)</name>
        <dbReference type="ChEBI" id="CHEBI:29105"/>
        <label>1</label>
    </ligand>
</feature>
<feature type="binding site" evidence="1">
    <location>
        <position position="207"/>
    </location>
    <ligand>
        <name>Zn(2+)</name>
        <dbReference type="ChEBI" id="CHEBI:29105"/>
        <label>1</label>
    </ligand>
</feature>
<name>DNAJ_EHRRG</name>
<protein>
    <recommendedName>
        <fullName evidence="1">Chaperone protein DnaJ</fullName>
    </recommendedName>
</protein>
<proteinExistence type="inferred from homology"/>
<sequence length="382" mass="42188">MSKSDYYDLLGLSKNATPEEIKKAYRKMALKYHPDKNPGDKAAEEKFKELSEAYDVLIDKDKRAAYDRYGHSAFSDGSGRGGFDFNSGFSTDFSDIFNDLFGGGFRGGRSSSKRQDGGTVGSDLRLDIEITLEDSFNGTKVPINYVTHVKCSSCSGSGSEGSVKSVQCNTCHGAGNTRTQQGFFTIERTCHVCNGEGEIIKNKCKKCSGSGRVRDEVNLLVTVPKGIESGDKIRLNGKGEAGYRGAQSGDLYVYPNIKKHKFFTRNGADLYCNVPIKMILATLGGHIEMPSIDGTWTKVKVPEGSQNGDKLRLKEKGMPVINSSRRGDMYIQITVETPINLTKQQKELLKKFDEEPNTVECNPQSTGFFQKVKSFWNDIRSS</sequence>
<organism>
    <name type="scientific">Ehrlichia ruminantium (strain Gardel)</name>
    <dbReference type="NCBI Taxonomy" id="302409"/>
    <lineage>
        <taxon>Bacteria</taxon>
        <taxon>Pseudomonadati</taxon>
        <taxon>Pseudomonadota</taxon>
        <taxon>Alphaproteobacteria</taxon>
        <taxon>Rickettsiales</taxon>
        <taxon>Anaplasmataceae</taxon>
        <taxon>Ehrlichia</taxon>
    </lineage>
</organism>
<reference key="1">
    <citation type="journal article" date="2006" name="J. Bacteriol.">
        <title>Comparative genomic analysis of three strains of Ehrlichia ruminantium reveals an active process of genome size plasticity.</title>
        <authorList>
            <person name="Frutos R."/>
            <person name="Viari A."/>
            <person name="Ferraz C."/>
            <person name="Morgat A."/>
            <person name="Eychenie S."/>
            <person name="Kandassamy Y."/>
            <person name="Chantal I."/>
            <person name="Bensaid A."/>
            <person name="Coissac E."/>
            <person name="Vachiery N."/>
            <person name="Demaille J."/>
            <person name="Martinez D."/>
        </authorList>
    </citation>
    <scope>NUCLEOTIDE SEQUENCE [LARGE SCALE GENOMIC DNA]</scope>
    <source>
        <strain>Gardel</strain>
    </source>
</reference>
<evidence type="ECO:0000255" key="1">
    <source>
        <dbReference type="HAMAP-Rule" id="MF_01152"/>
    </source>
</evidence>